<accession>Q5DTM8</accession>
<accession>A2AIR3</accession>
<accession>Q3UT10</accession>
<accession>Q3V350</accession>
<accession>Q7TT11</accession>
<accession>Q8BKA8</accession>
<accession>Q8BKN8</accession>
<accession>Q8BUF7</accession>
<accession>Q8BVU4</accession>
<sequence length="973" mass="113520">MSGIGNKRAAGEPGTSMPPEKKTAVEDSGTTVETIKLGGVSSTEELDIRTLQSKNRKLAEMLDQRQAIEDELREHIEKLERRQATDDASLLIVNRYWSQFDENIRIILKRYDLDQGLGDLLTERKALVVPEPEPDSDSNQERKDDRERGDGQEPAFSFLATLASSSSEEMESQLQERVESSRRAVSQIVTVYDKLQEKVDLLSRKLNSGDNLIVEEAVQELNSFLAQENVRLQELTDLLQEKHHTMSQEFCKLQGKVETAESRVSVLESMIDDLQWDIDKIRKREQRLNRHLAEVLERVNSKGYKVYGAGSSLYGGTITINARKFEEMNAELEENKELAQNRHCELEKLRQDFEEVTTQNEKLKVELRSAVEEVVKETPEYRCMQSQFSVLYNESLQLKAHLDEARTLLHGTRGTHQRQVELIERDEVSLHKKLRTEVIQLEDTLAQVRKEYEMLRIEFEQTLAANEQAGPINREMRHLISSLQNHNHQLKGEVLRYKRKLREAQSDLNKTRLRSGSALLQSQSSTEDPKDEPTELKQDSEDLATHSSALKASQEDEVKSKRDEEERERERREKEREREREREKEKEREREKQKLKESEKERDSVKDKEKGKHDDGRKKEAEIIKQLKIELKKAQESQKEMKLLLDMYRSAPKEQRDKVQLMAAEKKSKAELEDLRQRLKDLEDKEKKENKKMADEDALRKIRAVEEQIEYLQKKLAMAKQEEEALLSEMDVTGQAFEDMQEQNIRLMQQLREKDDANFKLMSERIKSNQIHKLLKEEKEELADQVLTLKTQVDAQLQVVRKLEEKEHLLQSNIGTGEKELGLRTQALEMNKRKAMEAAQLADDLKAQLELAQKKLHDFQDEIVENSVTKEKDLFNFKRAQEDISRLRRKLETTKKPDNVPKCDEILMEEIKDYKARLTCPCCNMRKKDAVLTKCFHVFCFECVKTRYDTRQRKCPKCNAAFGANDFHRIYIG</sequence>
<gene>
    <name type="primary">Rnf20</name>
    <name type="synonym">Bre1a</name>
    <name type="synonym">Kiaa4116</name>
</gene>
<keyword id="KW-0007">Acetylation</keyword>
<keyword id="KW-0025">Alternative splicing</keyword>
<keyword id="KW-0156">Chromatin regulator</keyword>
<keyword id="KW-0175">Coiled coil</keyword>
<keyword id="KW-0479">Metal-binding</keyword>
<keyword id="KW-0539">Nucleus</keyword>
<keyword id="KW-0597">Phosphoprotein</keyword>
<keyword id="KW-1185">Reference proteome</keyword>
<keyword id="KW-0808">Transferase</keyword>
<keyword id="KW-0833">Ubl conjugation pathway</keyword>
<keyword id="KW-0862">Zinc</keyword>
<keyword id="KW-0863">Zinc-finger</keyword>
<comment type="function">
    <text evidence="2 6">Component of the RNF20/40 E3 ubiquitin-protein ligase complex that mediates monoubiquitination of 'Lys-120' of histone H2B (H2BK120ub1) (PubMed:28453857). H2BK120ub1 gives a specific tag for epigenetic transcriptional activation and is also prerequisite for histone H3 'Lys-4' and 'Lys-79' methylation (H3K4me and H3K79me, respectively). It thereby plays a central role in histone code and gene regulation. The RNF20/40 complex forms a H2B ubiquitin ligase complex in cooperation with the E2 enzyme UBE2A or UBE2B; reports about the cooperation with UBE2E1/UBCH are contradictory. Required for transcriptional activation of Hox genes. Recruited to the MDM2 promoter, probably by being recruited by p53/TP53, and thereby acts as a transcriptional coactivator. Mediates the polyubiquitination of PA2G4 leading to its proteasome-mediated degradation.</text>
</comment>
<comment type="catalytic activity">
    <reaction evidence="2">
        <text>S-ubiquitinyl-[E2 ubiquitin-conjugating enzyme]-L-cysteine + [acceptor protein]-L-lysine = [E2 ubiquitin-conjugating enzyme]-L-cysteine + N(6)-ubiquitinyl-[acceptor protein]-L-lysine.</text>
        <dbReference type="EC" id="2.3.2.27"/>
    </reaction>
</comment>
<comment type="pathway">
    <text>Protein modification; protein ubiquitination.</text>
</comment>
<comment type="subunit">
    <text evidence="2 6">Component of the RNF20/40 complex (also known as BRE1 complex) probably composed of 2 copies of RNF20/BRE1A and 2 copies of RNF40/BRE1B. Interacts with UBE2E1/UBCH6. Interacts with p53/TP53 and WAC. Interacts with PAF1; the interaction mediates the association of the PAF1 and RNF20/40 complexes which is a prerequsite for recruitment of UBE2A/B. Interacts with PA2G4. Interacts with FBXL19 (PubMed:28453857).</text>
</comment>
<comment type="subcellular location">
    <subcellularLocation>
        <location evidence="2">Nucleus</location>
    </subcellularLocation>
</comment>
<comment type="alternative products">
    <event type="alternative splicing"/>
    <isoform>
        <id>Q5DTM8-1</id>
        <name>1</name>
        <sequence type="displayed"/>
    </isoform>
    <isoform>
        <id>Q5DTM8-2</id>
        <name>2</name>
        <sequence type="described" ref="VSP_016679"/>
    </isoform>
</comment>
<comment type="similarity">
    <text evidence="8">Belongs to the BRE1 family.</text>
</comment>
<comment type="sequence caution" evidence="8">
    <conflict type="erroneous initiation">
        <sequence resource="EMBL-CDS" id="BAD90290"/>
    </conflict>
    <text>Extended N-terminus.</text>
</comment>
<name>BRE1A_MOUSE</name>
<protein>
    <recommendedName>
        <fullName>E3 ubiquitin-protein ligase BRE1A</fullName>
        <shortName>BRE1-A</shortName>
        <ecNumber evidence="2">2.3.2.27</ecNumber>
    </recommendedName>
    <alternativeName>
        <fullName>RING finger protein 20</fullName>
    </alternativeName>
    <alternativeName>
        <fullName evidence="8">RING-type E3 ubiquitin transferase BRE1A</fullName>
    </alternativeName>
</protein>
<dbReference type="EC" id="2.3.2.27" evidence="2"/>
<dbReference type="EMBL" id="AK220492">
    <property type="protein sequence ID" value="BAD90290.1"/>
    <property type="status" value="ALT_INIT"/>
    <property type="molecule type" value="mRNA"/>
</dbReference>
<dbReference type="EMBL" id="AL732521">
    <property type="status" value="NOT_ANNOTATED_CDS"/>
    <property type="molecule type" value="Genomic_DNA"/>
</dbReference>
<dbReference type="EMBL" id="BC052482">
    <property type="protein sequence ID" value="AAH52482.1"/>
    <property type="molecule type" value="mRNA"/>
</dbReference>
<dbReference type="EMBL" id="AK048862">
    <property type="protein sequence ID" value="BAE43337.1"/>
    <property type="molecule type" value="mRNA"/>
</dbReference>
<dbReference type="EMBL" id="AK051278">
    <property type="protein sequence ID" value="BAC34590.2"/>
    <property type="molecule type" value="mRNA"/>
</dbReference>
<dbReference type="EMBL" id="AK053783">
    <property type="protein sequence ID" value="BAC35521.1"/>
    <property type="molecule type" value="mRNA"/>
</dbReference>
<dbReference type="EMBL" id="AK076501">
    <property type="protein sequence ID" value="BAC36367.1"/>
    <property type="molecule type" value="mRNA"/>
</dbReference>
<dbReference type="EMBL" id="AK085436">
    <property type="protein sequence ID" value="BAC39446.1"/>
    <property type="molecule type" value="mRNA"/>
</dbReference>
<dbReference type="EMBL" id="AK139883">
    <property type="protein sequence ID" value="BAE24170.1"/>
    <property type="molecule type" value="mRNA"/>
</dbReference>
<dbReference type="CCDS" id="CCDS18178.1">
    <molecule id="Q5DTM8-1"/>
</dbReference>
<dbReference type="RefSeq" id="NP_001156735.1">
    <molecule id="Q5DTM8-1"/>
    <property type="nucleotide sequence ID" value="NM_001163263.1"/>
</dbReference>
<dbReference type="RefSeq" id="NP_892044.1">
    <molecule id="Q5DTM8-1"/>
    <property type="nucleotide sequence ID" value="NM_182999.2"/>
</dbReference>
<dbReference type="RefSeq" id="XP_006537616.1">
    <molecule id="Q5DTM8-1"/>
    <property type="nucleotide sequence ID" value="XM_006537553.4"/>
</dbReference>
<dbReference type="RefSeq" id="XP_011248208.1">
    <molecule id="Q5DTM8-1"/>
    <property type="nucleotide sequence ID" value="XM_011249906.4"/>
</dbReference>
<dbReference type="SMR" id="Q5DTM8"/>
<dbReference type="BioGRID" id="224649">
    <property type="interactions" value="18"/>
</dbReference>
<dbReference type="FunCoup" id="Q5DTM8">
    <property type="interactions" value="3946"/>
</dbReference>
<dbReference type="IntAct" id="Q5DTM8">
    <property type="interactions" value="1"/>
</dbReference>
<dbReference type="MINT" id="Q5DTM8"/>
<dbReference type="STRING" id="10090.ENSMUSP00000128546"/>
<dbReference type="GlyGen" id="Q5DTM8">
    <property type="glycosylation" value="3 sites, 1 O-linked glycan (3 sites)"/>
</dbReference>
<dbReference type="iPTMnet" id="Q5DTM8"/>
<dbReference type="PhosphoSitePlus" id="Q5DTM8"/>
<dbReference type="SwissPalm" id="Q5DTM8"/>
<dbReference type="jPOST" id="Q5DTM8"/>
<dbReference type="PaxDb" id="10090-ENSMUSP00000029989"/>
<dbReference type="PeptideAtlas" id="Q5DTM8"/>
<dbReference type="ProteomicsDB" id="265379">
    <molecule id="Q5DTM8-1"/>
</dbReference>
<dbReference type="ProteomicsDB" id="265380">
    <molecule id="Q5DTM8-2"/>
</dbReference>
<dbReference type="Pumba" id="Q5DTM8"/>
<dbReference type="Antibodypedia" id="29174">
    <property type="antibodies" value="354 antibodies from 33 providers"/>
</dbReference>
<dbReference type="DNASU" id="109331"/>
<dbReference type="Ensembl" id="ENSMUST00000029989.11">
    <molecule id="Q5DTM8-1"/>
    <property type="protein sequence ID" value="ENSMUSP00000029989.5"/>
    <property type="gene ID" value="ENSMUSG00000028309.15"/>
</dbReference>
<dbReference type="Ensembl" id="ENSMUST00000167496.8">
    <molecule id="Q5DTM8-1"/>
    <property type="protein sequence ID" value="ENSMUSP00000128546.2"/>
    <property type="gene ID" value="ENSMUSG00000028309.15"/>
</dbReference>
<dbReference type="GeneID" id="109331"/>
<dbReference type="KEGG" id="mmu:109331"/>
<dbReference type="UCSC" id="uc008swa.2">
    <molecule id="Q5DTM8-1"/>
    <property type="organism name" value="mouse"/>
</dbReference>
<dbReference type="UCSC" id="uc012dec.1">
    <molecule id="Q5DTM8-2"/>
    <property type="organism name" value="mouse"/>
</dbReference>
<dbReference type="AGR" id="MGI:1925927"/>
<dbReference type="CTD" id="56254"/>
<dbReference type="MGI" id="MGI:1925927">
    <property type="gene designation" value="Rnf20"/>
</dbReference>
<dbReference type="VEuPathDB" id="HostDB:ENSMUSG00000028309"/>
<dbReference type="eggNOG" id="KOG0978">
    <property type="taxonomic scope" value="Eukaryota"/>
</dbReference>
<dbReference type="GeneTree" id="ENSGT00390000002866"/>
<dbReference type="HOGENOM" id="CLU_002640_0_0_1"/>
<dbReference type="InParanoid" id="Q5DTM8"/>
<dbReference type="OMA" id="YSNIDTR"/>
<dbReference type="OrthoDB" id="10266039at2759"/>
<dbReference type="PhylomeDB" id="Q5DTM8"/>
<dbReference type="TreeFam" id="TF323183"/>
<dbReference type="Reactome" id="R-MMU-8866654">
    <property type="pathway name" value="E3 ubiquitin ligases ubiquitinate target proteins"/>
</dbReference>
<dbReference type="Reactome" id="R-MMU-9013422">
    <property type="pathway name" value="RHOBTB1 GTPase cycle"/>
</dbReference>
<dbReference type="UniPathway" id="UPA00143"/>
<dbReference type="BioGRID-ORCS" id="109331">
    <property type="hits" value="32 hits in 87 CRISPR screens"/>
</dbReference>
<dbReference type="ChiTaRS" id="Rnf20">
    <property type="organism name" value="mouse"/>
</dbReference>
<dbReference type="PRO" id="PR:Q5DTM8"/>
<dbReference type="Proteomes" id="UP000000589">
    <property type="component" value="Chromosome 4"/>
</dbReference>
<dbReference type="RNAct" id="Q5DTM8">
    <property type="molecule type" value="protein"/>
</dbReference>
<dbReference type="Bgee" id="ENSMUSG00000028309">
    <property type="expression patterns" value="Expressed in embryonic post-anal tail and 253 other cell types or tissues"/>
</dbReference>
<dbReference type="ExpressionAtlas" id="Q5DTM8">
    <property type="expression patterns" value="baseline and differential"/>
</dbReference>
<dbReference type="GO" id="GO:0033503">
    <property type="term" value="C:HULC complex"/>
    <property type="evidence" value="ECO:0000250"/>
    <property type="project" value="UniProtKB"/>
</dbReference>
<dbReference type="GO" id="GO:0005730">
    <property type="term" value="C:nucleolus"/>
    <property type="evidence" value="ECO:0007669"/>
    <property type="project" value="Ensembl"/>
</dbReference>
<dbReference type="GO" id="GO:0005654">
    <property type="term" value="C:nucleoplasm"/>
    <property type="evidence" value="ECO:0007669"/>
    <property type="project" value="Ensembl"/>
</dbReference>
<dbReference type="GO" id="GO:0003682">
    <property type="term" value="F:chromatin binding"/>
    <property type="evidence" value="ECO:0000314"/>
    <property type="project" value="MGI"/>
</dbReference>
<dbReference type="GO" id="GO:0042393">
    <property type="term" value="F:histone binding"/>
    <property type="evidence" value="ECO:0007669"/>
    <property type="project" value="Ensembl"/>
</dbReference>
<dbReference type="GO" id="GO:0140850">
    <property type="term" value="F:histone H2B C-terminal K residue ubiquitin ligase activity"/>
    <property type="evidence" value="ECO:0000315"/>
    <property type="project" value="MGI"/>
</dbReference>
<dbReference type="GO" id="GO:0042802">
    <property type="term" value="F:identical protein binding"/>
    <property type="evidence" value="ECO:0007669"/>
    <property type="project" value="Ensembl"/>
</dbReference>
<dbReference type="GO" id="GO:0003730">
    <property type="term" value="F:mRNA 3'-UTR binding"/>
    <property type="evidence" value="ECO:0007669"/>
    <property type="project" value="Ensembl"/>
</dbReference>
<dbReference type="GO" id="GO:0002039">
    <property type="term" value="F:p53 binding"/>
    <property type="evidence" value="ECO:0007669"/>
    <property type="project" value="Ensembl"/>
</dbReference>
<dbReference type="GO" id="GO:0003713">
    <property type="term" value="F:transcription coactivator activity"/>
    <property type="evidence" value="ECO:0007669"/>
    <property type="project" value="Ensembl"/>
</dbReference>
<dbReference type="GO" id="GO:0031625">
    <property type="term" value="F:ubiquitin protein ligase binding"/>
    <property type="evidence" value="ECO:0007669"/>
    <property type="project" value="Ensembl"/>
</dbReference>
<dbReference type="GO" id="GO:0008270">
    <property type="term" value="F:zinc ion binding"/>
    <property type="evidence" value="ECO:0007669"/>
    <property type="project" value="UniProtKB-KW"/>
</dbReference>
<dbReference type="GO" id="GO:0030336">
    <property type="term" value="P:negative regulation of cell migration"/>
    <property type="evidence" value="ECO:0007669"/>
    <property type="project" value="Ensembl"/>
</dbReference>
<dbReference type="GO" id="GO:0045944">
    <property type="term" value="P:positive regulation of transcription by RNA polymerase II"/>
    <property type="evidence" value="ECO:0007669"/>
    <property type="project" value="Ensembl"/>
</dbReference>
<dbReference type="GO" id="GO:0000209">
    <property type="term" value="P:protein polyubiquitination"/>
    <property type="evidence" value="ECO:0007669"/>
    <property type="project" value="Ensembl"/>
</dbReference>
<dbReference type="GO" id="GO:0006511">
    <property type="term" value="P:ubiquitin-dependent protein catabolic process"/>
    <property type="evidence" value="ECO:0007669"/>
    <property type="project" value="Ensembl"/>
</dbReference>
<dbReference type="CDD" id="cd16814">
    <property type="entry name" value="RING-HC_RNF20"/>
    <property type="match status" value="1"/>
</dbReference>
<dbReference type="FunFam" id="1.20.1170.10:FF:000003">
    <property type="entry name" value="E3 ubiquitin protein ligase"/>
    <property type="match status" value="1"/>
</dbReference>
<dbReference type="FunFam" id="3.30.40.10:FF:000040">
    <property type="entry name" value="E3 ubiquitin protein ligase"/>
    <property type="match status" value="1"/>
</dbReference>
<dbReference type="Gene3D" id="1.20.1170.10">
    <property type="match status" value="1"/>
</dbReference>
<dbReference type="Gene3D" id="3.30.40.10">
    <property type="entry name" value="Zinc/RING finger domain, C3HC4 (zinc finger)"/>
    <property type="match status" value="1"/>
</dbReference>
<dbReference type="InterPro" id="IPR013956">
    <property type="entry name" value="E3_ubiquit_lig_Bre1"/>
</dbReference>
<dbReference type="InterPro" id="IPR018957">
    <property type="entry name" value="Znf_C3HC4_RING-type"/>
</dbReference>
<dbReference type="InterPro" id="IPR001841">
    <property type="entry name" value="Znf_RING"/>
</dbReference>
<dbReference type="InterPro" id="IPR013083">
    <property type="entry name" value="Znf_RING/FYVE/PHD"/>
</dbReference>
<dbReference type="InterPro" id="IPR017907">
    <property type="entry name" value="Znf_RING_CS"/>
</dbReference>
<dbReference type="PANTHER" id="PTHR23163:SF2">
    <property type="entry name" value="E3 UBIQUITIN-PROTEIN LIGASE BRE1A"/>
    <property type="match status" value="1"/>
</dbReference>
<dbReference type="PANTHER" id="PTHR23163">
    <property type="entry name" value="RING FINGER PROTEIN-RELATED"/>
    <property type="match status" value="1"/>
</dbReference>
<dbReference type="Pfam" id="PF00097">
    <property type="entry name" value="zf-C3HC4"/>
    <property type="match status" value="1"/>
</dbReference>
<dbReference type="SMART" id="SM00184">
    <property type="entry name" value="RING"/>
    <property type="match status" value="1"/>
</dbReference>
<dbReference type="SUPFAM" id="SSF57850">
    <property type="entry name" value="RING/U-box"/>
    <property type="match status" value="1"/>
</dbReference>
<dbReference type="PROSITE" id="PS00518">
    <property type="entry name" value="ZF_RING_1"/>
    <property type="match status" value="1"/>
</dbReference>
<dbReference type="PROSITE" id="PS50089">
    <property type="entry name" value="ZF_RING_2"/>
    <property type="match status" value="1"/>
</dbReference>
<reference key="1">
    <citation type="submission" date="2005-02" db="EMBL/GenBank/DDBJ databases">
        <title>Prediction of the coding sequences of mouse homologues of KIAA gene. The complete nucleotide sequences of mouse KIAA-homologous cDNAs identified by screening of terminal sequences of cDNA clones randomly sampled from size-fractionated libraries.</title>
        <authorList>
            <person name="Okazaki N."/>
            <person name="Kikuno R.F."/>
            <person name="Ohara R."/>
            <person name="Inamoto S."/>
            <person name="Nagase T."/>
            <person name="Ohara O."/>
            <person name="Koga H."/>
        </authorList>
    </citation>
    <scope>NUCLEOTIDE SEQUENCE [LARGE SCALE MRNA]</scope>
    <source>
        <tissue>Fetal brain</tissue>
    </source>
</reference>
<reference key="2">
    <citation type="journal article" date="2009" name="PLoS Biol.">
        <title>Lineage-specific biology revealed by a finished genome assembly of the mouse.</title>
        <authorList>
            <person name="Church D.M."/>
            <person name="Goodstadt L."/>
            <person name="Hillier L.W."/>
            <person name="Zody M.C."/>
            <person name="Goldstein S."/>
            <person name="She X."/>
            <person name="Bult C.J."/>
            <person name="Agarwala R."/>
            <person name="Cherry J.L."/>
            <person name="DiCuccio M."/>
            <person name="Hlavina W."/>
            <person name="Kapustin Y."/>
            <person name="Meric P."/>
            <person name="Maglott D."/>
            <person name="Birtle Z."/>
            <person name="Marques A.C."/>
            <person name="Graves T."/>
            <person name="Zhou S."/>
            <person name="Teague B."/>
            <person name="Potamousis K."/>
            <person name="Churas C."/>
            <person name="Place M."/>
            <person name="Herschleb J."/>
            <person name="Runnheim R."/>
            <person name="Forrest D."/>
            <person name="Amos-Landgraf J."/>
            <person name="Schwartz D.C."/>
            <person name="Cheng Z."/>
            <person name="Lindblad-Toh K."/>
            <person name="Eichler E.E."/>
            <person name="Ponting C.P."/>
        </authorList>
    </citation>
    <scope>NUCLEOTIDE SEQUENCE [LARGE SCALE GENOMIC DNA]</scope>
    <source>
        <strain>C57BL/6J</strain>
    </source>
</reference>
<reference key="3">
    <citation type="journal article" date="2004" name="Genome Res.">
        <title>The status, quality, and expansion of the NIH full-length cDNA project: the Mammalian Gene Collection (MGC).</title>
        <authorList>
            <consortium name="The MGC Project Team"/>
        </authorList>
    </citation>
    <scope>NUCLEOTIDE SEQUENCE [LARGE SCALE MRNA]</scope>
    <source>
        <tissue>Olfactory epithelium</tissue>
    </source>
</reference>
<reference key="4">
    <citation type="journal article" date="2005" name="Science">
        <title>The transcriptional landscape of the mammalian genome.</title>
        <authorList>
            <person name="Carninci P."/>
            <person name="Kasukawa T."/>
            <person name="Katayama S."/>
            <person name="Gough J."/>
            <person name="Frith M.C."/>
            <person name="Maeda N."/>
            <person name="Oyama R."/>
            <person name="Ravasi T."/>
            <person name="Lenhard B."/>
            <person name="Wells C."/>
            <person name="Kodzius R."/>
            <person name="Shimokawa K."/>
            <person name="Bajic V.B."/>
            <person name="Brenner S.E."/>
            <person name="Batalov S."/>
            <person name="Forrest A.R."/>
            <person name="Zavolan M."/>
            <person name="Davis M.J."/>
            <person name="Wilming L.G."/>
            <person name="Aidinis V."/>
            <person name="Allen J.E."/>
            <person name="Ambesi-Impiombato A."/>
            <person name="Apweiler R."/>
            <person name="Aturaliya R.N."/>
            <person name="Bailey T.L."/>
            <person name="Bansal M."/>
            <person name="Baxter L."/>
            <person name="Beisel K.W."/>
            <person name="Bersano T."/>
            <person name="Bono H."/>
            <person name="Chalk A.M."/>
            <person name="Chiu K.P."/>
            <person name="Choudhary V."/>
            <person name="Christoffels A."/>
            <person name="Clutterbuck D.R."/>
            <person name="Crowe M.L."/>
            <person name="Dalla E."/>
            <person name="Dalrymple B.P."/>
            <person name="de Bono B."/>
            <person name="Della Gatta G."/>
            <person name="di Bernardo D."/>
            <person name="Down T."/>
            <person name="Engstrom P."/>
            <person name="Fagiolini M."/>
            <person name="Faulkner G."/>
            <person name="Fletcher C.F."/>
            <person name="Fukushima T."/>
            <person name="Furuno M."/>
            <person name="Futaki S."/>
            <person name="Gariboldi M."/>
            <person name="Georgii-Hemming P."/>
            <person name="Gingeras T.R."/>
            <person name="Gojobori T."/>
            <person name="Green R.E."/>
            <person name="Gustincich S."/>
            <person name="Harbers M."/>
            <person name="Hayashi Y."/>
            <person name="Hensch T.K."/>
            <person name="Hirokawa N."/>
            <person name="Hill D."/>
            <person name="Huminiecki L."/>
            <person name="Iacono M."/>
            <person name="Ikeo K."/>
            <person name="Iwama A."/>
            <person name="Ishikawa T."/>
            <person name="Jakt M."/>
            <person name="Kanapin A."/>
            <person name="Katoh M."/>
            <person name="Kawasawa Y."/>
            <person name="Kelso J."/>
            <person name="Kitamura H."/>
            <person name="Kitano H."/>
            <person name="Kollias G."/>
            <person name="Krishnan S.P."/>
            <person name="Kruger A."/>
            <person name="Kummerfeld S.K."/>
            <person name="Kurochkin I.V."/>
            <person name="Lareau L.F."/>
            <person name="Lazarevic D."/>
            <person name="Lipovich L."/>
            <person name="Liu J."/>
            <person name="Liuni S."/>
            <person name="McWilliam S."/>
            <person name="Madan Babu M."/>
            <person name="Madera M."/>
            <person name="Marchionni L."/>
            <person name="Matsuda H."/>
            <person name="Matsuzawa S."/>
            <person name="Miki H."/>
            <person name="Mignone F."/>
            <person name="Miyake S."/>
            <person name="Morris K."/>
            <person name="Mottagui-Tabar S."/>
            <person name="Mulder N."/>
            <person name="Nakano N."/>
            <person name="Nakauchi H."/>
            <person name="Ng P."/>
            <person name="Nilsson R."/>
            <person name="Nishiguchi S."/>
            <person name="Nishikawa S."/>
            <person name="Nori F."/>
            <person name="Ohara O."/>
            <person name="Okazaki Y."/>
            <person name="Orlando V."/>
            <person name="Pang K.C."/>
            <person name="Pavan W.J."/>
            <person name="Pavesi G."/>
            <person name="Pesole G."/>
            <person name="Petrovsky N."/>
            <person name="Piazza S."/>
            <person name="Reed J."/>
            <person name="Reid J.F."/>
            <person name="Ring B.Z."/>
            <person name="Ringwald M."/>
            <person name="Rost B."/>
            <person name="Ruan Y."/>
            <person name="Salzberg S.L."/>
            <person name="Sandelin A."/>
            <person name="Schneider C."/>
            <person name="Schoenbach C."/>
            <person name="Sekiguchi K."/>
            <person name="Semple C.A."/>
            <person name="Seno S."/>
            <person name="Sessa L."/>
            <person name="Sheng Y."/>
            <person name="Shibata Y."/>
            <person name="Shimada H."/>
            <person name="Shimada K."/>
            <person name="Silva D."/>
            <person name="Sinclair B."/>
            <person name="Sperling S."/>
            <person name="Stupka E."/>
            <person name="Sugiura K."/>
            <person name="Sultana R."/>
            <person name="Takenaka Y."/>
            <person name="Taki K."/>
            <person name="Tammoja K."/>
            <person name="Tan S.L."/>
            <person name="Tang S."/>
            <person name="Taylor M.S."/>
            <person name="Tegner J."/>
            <person name="Teichmann S.A."/>
            <person name="Ueda H.R."/>
            <person name="van Nimwegen E."/>
            <person name="Verardo R."/>
            <person name="Wei C.L."/>
            <person name="Yagi K."/>
            <person name="Yamanishi H."/>
            <person name="Zabarovsky E."/>
            <person name="Zhu S."/>
            <person name="Zimmer A."/>
            <person name="Hide W."/>
            <person name="Bult C."/>
            <person name="Grimmond S.M."/>
            <person name="Teasdale R.D."/>
            <person name="Liu E.T."/>
            <person name="Brusic V."/>
            <person name="Quackenbush J."/>
            <person name="Wahlestedt C."/>
            <person name="Mattick J.S."/>
            <person name="Hume D.A."/>
            <person name="Kai C."/>
            <person name="Sasaki D."/>
            <person name="Tomaru Y."/>
            <person name="Fukuda S."/>
            <person name="Kanamori-Katayama M."/>
            <person name="Suzuki M."/>
            <person name="Aoki J."/>
            <person name="Arakawa T."/>
            <person name="Iida J."/>
            <person name="Imamura K."/>
            <person name="Itoh M."/>
            <person name="Kato T."/>
            <person name="Kawaji H."/>
            <person name="Kawagashira N."/>
            <person name="Kawashima T."/>
            <person name="Kojima M."/>
            <person name="Kondo S."/>
            <person name="Konno H."/>
            <person name="Nakano K."/>
            <person name="Ninomiya N."/>
            <person name="Nishio T."/>
            <person name="Okada M."/>
            <person name="Plessy C."/>
            <person name="Shibata K."/>
            <person name="Shiraki T."/>
            <person name="Suzuki S."/>
            <person name="Tagami M."/>
            <person name="Waki K."/>
            <person name="Watahiki A."/>
            <person name="Okamura-Oho Y."/>
            <person name="Suzuki H."/>
            <person name="Kawai J."/>
            <person name="Hayashizaki Y."/>
        </authorList>
    </citation>
    <scope>NUCLEOTIDE SEQUENCE [LARGE SCALE MRNA] OF 1-607 (ISOFORM 1)</scope>
    <scope>NUCLEOTIDE SEQUENCE [LARGE SCALE MRNA] OF 1-616 (ISOFORM 2)</scope>
    <source>
        <strain>C57BL/6J</strain>
        <tissue>Cerebellum</tissue>
        <tissue>Egg</tissue>
        <tissue>Eye</tissue>
        <tissue>Head</tissue>
        <tissue>Kidney</tissue>
        <tissue>Spinal ganglion</tissue>
    </source>
</reference>
<reference key="5">
    <citation type="journal article" date="2010" name="Cell">
        <title>A tissue-specific atlas of mouse protein phosphorylation and expression.</title>
        <authorList>
            <person name="Huttlin E.L."/>
            <person name="Jedrychowski M.P."/>
            <person name="Elias J.E."/>
            <person name="Goswami T."/>
            <person name="Rad R."/>
            <person name="Beausoleil S.A."/>
            <person name="Villen J."/>
            <person name="Haas W."/>
            <person name="Sowa M.E."/>
            <person name="Gygi S.P."/>
        </authorList>
    </citation>
    <scope>PHOSPHORYLATION [LARGE SCALE ANALYSIS] AT SER-136 AND SER-138</scope>
    <scope>IDENTIFICATION BY MASS SPECTROMETRY [LARGE SCALE ANALYSIS]</scope>
    <source>
        <tissue>Brain</tissue>
        <tissue>Brown adipose tissue</tissue>
        <tissue>Heart</tissue>
        <tissue>Kidney</tissue>
        <tissue>Liver</tissue>
        <tissue>Lung</tissue>
        <tissue>Pancreas</tissue>
        <tissue>Spleen</tissue>
        <tissue>Testis</tissue>
    </source>
</reference>
<reference key="6">
    <citation type="journal article" date="2017" name="Nucleic Acids Res.">
        <title>Fbxl19 recruitment to CpG islands is required for Rnf20-mediated H2B mono-ubiquitination.</title>
        <authorList>
            <person name="Lee B.K."/>
            <person name="Lee J."/>
            <person name="Shen W."/>
            <person name="Rhee C."/>
            <person name="Chung H."/>
            <person name="Kim J."/>
        </authorList>
    </citation>
    <scope>FUNCTION</scope>
    <scope>INTERACTION WITH FBXL19</scope>
</reference>
<proteinExistence type="evidence at protein level"/>
<evidence type="ECO:0000250" key="1">
    <source>
        <dbReference type="UniProtKB" id="Q3U319"/>
    </source>
</evidence>
<evidence type="ECO:0000250" key="2">
    <source>
        <dbReference type="UniProtKB" id="Q5VTR2"/>
    </source>
</evidence>
<evidence type="ECO:0000255" key="3"/>
<evidence type="ECO:0000255" key="4">
    <source>
        <dbReference type="PROSITE-ProRule" id="PRU00175"/>
    </source>
</evidence>
<evidence type="ECO:0000256" key="5">
    <source>
        <dbReference type="SAM" id="MobiDB-lite"/>
    </source>
</evidence>
<evidence type="ECO:0000269" key="6">
    <source>
    </source>
</evidence>
<evidence type="ECO:0000303" key="7">
    <source>
    </source>
</evidence>
<evidence type="ECO:0000305" key="8"/>
<evidence type="ECO:0007744" key="9">
    <source>
    </source>
</evidence>
<organism>
    <name type="scientific">Mus musculus</name>
    <name type="common">Mouse</name>
    <dbReference type="NCBI Taxonomy" id="10090"/>
    <lineage>
        <taxon>Eukaryota</taxon>
        <taxon>Metazoa</taxon>
        <taxon>Chordata</taxon>
        <taxon>Craniata</taxon>
        <taxon>Vertebrata</taxon>
        <taxon>Euteleostomi</taxon>
        <taxon>Mammalia</taxon>
        <taxon>Eutheria</taxon>
        <taxon>Euarchontoglires</taxon>
        <taxon>Glires</taxon>
        <taxon>Rodentia</taxon>
        <taxon>Myomorpha</taxon>
        <taxon>Muroidea</taxon>
        <taxon>Muridae</taxon>
        <taxon>Murinae</taxon>
        <taxon>Mus</taxon>
        <taxon>Mus</taxon>
    </lineage>
</organism>
<feature type="chain" id="PRO_0000055837" description="E3 ubiquitin-protein ligase BRE1A">
    <location>
        <begin position="1"/>
        <end position="973"/>
    </location>
</feature>
<feature type="zinc finger region" description="RING-type" evidence="4">
    <location>
        <begin position="920"/>
        <end position="959"/>
    </location>
</feature>
<feature type="region of interest" description="Disordered" evidence="5">
    <location>
        <begin position="1"/>
        <end position="37"/>
    </location>
</feature>
<feature type="region of interest" description="Disordered" evidence="5">
    <location>
        <begin position="128"/>
        <end position="153"/>
    </location>
</feature>
<feature type="region of interest" description="Disordered" evidence="5">
    <location>
        <begin position="507"/>
        <end position="620"/>
    </location>
</feature>
<feature type="coiled-coil region" evidence="3">
    <location>
        <begin position="43"/>
        <end position="90"/>
    </location>
</feature>
<feature type="coiled-coil region" evidence="3">
    <location>
        <begin position="168"/>
        <end position="378"/>
    </location>
</feature>
<feature type="coiled-coil region" evidence="3">
    <location>
        <begin position="429"/>
        <end position="896"/>
    </location>
</feature>
<feature type="compositionally biased region" description="Basic and acidic residues" evidence="5">
    <location>
        <begin position="139"/>
        <end position="151"/>
    </location>
</feature>
<feature type="compositionally biased region" description="Basic and acidic residues" evidence="5">
    <location>
        <begin position="527"/>
        <end position="544"/>
    </location>
</feature>
<feature type="compositionally biased region" description="Basic and acidic residues" evidence="5">
    <location>
        <begin position="553"/>
        <end position="620"/>
    </location>
</feature>
<feature type="modified residue" description="N6-acetyllysine" evidence="1">
    <location>
        <position position="21"/>
    </location>
</feature>
<feature type="modified residue" description="Phosphoserine" evidence="2">
    <location>
        <position position="41"/>
    </location>
</feature>
<feature type="modified residue" description="Phosphoserine" evidence="9">
    <location>
        <position position="136"/>
    </location>
</feature>
<feature type="modified residue" description="Phosphoserine" evidence="9">
    <location>
        <position position="138"/>
    </location>
</feature>
<feature type="modified residue" description="N6-acetyllysine" evidence="2">
    <location>
        <position position="348"/>
    </location>
</feature>
<feature type="modified residue" description="N6-acetyllysine" evidence="1">
    <location>
        <position position="510"/>
    </location>
</feature>
<feature type="modified residue" description="Phosphoserine" evidence="2">
    <location>
        <position position="522"/>
    </location>
</feature>
<feature type="modified residue" description="Phosphoserine" evidence="1">
    <location>
        <position position="560"/>
    </location>
</feature>
<feature type="splice variant" id="VSP_016679" description="In isoform 2." evidence="7">
    <location>
        <begin position="100"/>
        <end position="249"/>
    </location>
</feature>
<feature type="sequence conflict" description="In Ref. 4; BAC36367." evidence="8" ref="4">
    <original>V</original>
    <variation>L</variation>
    <location>
        <position position="199"/>
    </location>
</feature>
<feature type="sequence conflict" description="In Ref. 4; BAC36367." evidence="8" ref="4">
    <original>S</original>
    <variation>F</variation>
    <location>
        <position position="506"/>
    </location>
</feature>
<feature type="sequence conflict" description="In Ref. 4; BAC36367." evidence="8" ref="4">
    <original>S</original>
    <variation>F</variation>
    <location>
        <position position="540"/>
    </location>
</feature>
<feature type="sequence conflict" description="In Ref. 4; BAE43337." evidence="8" ref="4">
    <original>D</original>
    <variation>G</variation>
    <location>
        <position position="607"/>
    </location>
</feature>